<reference key="1">
    <citation type="journal article" date="2001" name="Nature">
        <title>Genome sequence of enterohaemorrhagic Escherichia coli O157:H7.</title>
        <authorList>
            <person name="Perna N.T."/>
            <person name="Plunkett G. III"/>
            <person name="Burland V."/>
            <person name="Mau B."/>
            <person name="Glasner J.D."/>
            <person name="Rose D.J."/>
            <person name="Mayhew G.F."/>
            <person name="Evans P.S."/>
            <person name="Gregor J."/>
            <person name="Kirkpatrick H.A."/>
            <person name="Posfai G."/>
            <person name="Hackett J."/>
            <person name="Klink S."/>
            <person name="Boutin A."/>
            <person name="Shao Y."/>
            <person name="Miller L."/>
            <person name="Grotbeck E.J."/>
            <person name="Davis N.W."/>
            <person name="Lim A."/>
            <person name="Dimalanta E.T."/>
            <person name="Potamousis K."/>
            <person name="Apodaca J."/>
            <person name="Anantharaman T.S."/>
            <person name="Lin J."/>
            <person name="Yen G."/>
            <person name="Schwartz D.C."/>
            <person name="Welch R.A."/>
            <person name="Blattner F.R."/>
        </authorList>
    </citation>
    <scope>NUCLEOTIDE SEQUENCE [LARGE SCALE GENOMIC DNA]</scope>
    <source>
        <strain>O157:H7 / EDL933 / ATCC 700927 / EHEC</strain>
    </source>
</reference>
<reference key="2">
    <citation type="journal article" date="2001" name="DNA Res.">
        <title>Complete genome sequence of enterohemorrhagic Escherichia coli O157:H7 and genomic comparison with a laboratory strain K-12.</title>
        <authorList>
            <person name="Hayashi T."/>
            <person name="Makino K."/>
            <person name="Ohnishi M."/>
            <person name="Kurokawa K."/>
            <person name="Ishii K."/>
            <person name="Yokoyama K."/>
            <person name="Han C.-G."/>
            <person name="Ohtsubo E."/>
            <person name="Nakayama K."/>
            <person name="Murata T."/>
            <person name="Tanaka M."/>
            <person name="Tobe T."/>
            <person name="Iida T."/>
            <person name="Takami H."/>
            <person name="Honda T."/>
            <person name="Sasakawa C."/>
            <person name="Ogasawara N."/>
            <person name="Yasunaga T."/>
            <person name="Kuhara S."/>
            <person name="Shiba T."/>
            <person name="Hattori M."/>
            <person name="Shinagawa H."/>
        </authorList>
    </citation>
    <scope>NUCLEOTIDE SEQUENCE [LARGE SCALE GENOMIC DNA]</scope>
    <source>
        <strain>O157:H7 / Sakai / RIMD 0509952 / EHEC</strain>
    </source>
</reference>
<dbReference type="EMBL" id="AE005174">
    <property type="protein sequence ID" value="AAG59384.1"/>
    <property type="status" value="ALT_INIT"/>
    <property type="molecule type" value="Genomic_DNA"/>
</dbReference>
<dbReference type="EMBL" id="BA000007">
    <property type="protein sequence ID" value="BAB38587.2"/>
    <property type="molecule type" value="Genomic_DNA"/>
</dbReference>
<dbReference type="RefSeq" id="NP_313191.3">
    <property type="nucleotide sequence ID" value="NC_002695.1"/>
</dbReference>
<dbReference type="RefSeq" id="WP_000811566.1">
    <property type="nucleotide sequence ID" value="NZ_VOAI01000008.1"/>
</dbReference>
<dbReference type="SMR" id="P0AF84"/>
<dbReference type="STRING" id="155864.Z5795"/>
<dbReference type="GeneID" id="914015"/>
<dbReference type="GeneID" id="93777636"/>
<dbReference type="KEGG" id="ece:Z5795"/>
<dbReference type="KEGG" id="ecs:ECs_5164"/>
<dbReference type="PATRIC" id="fig|386585.9.peg.5398"/>
<dbReference type="eggNOG" id="ENOG5032S43">
    <property type="taxonomic scope" value="Bacteria"/>
</dbReference>
<dbReference type="HOGENOM" id="CLU_158602_3_0_6"/>
<dbReference type="Proteomes" id="UP000000558">
    <property type="component" value="Chromosome"/>
</dbReference>
<dbReference type="Proteomes" id="UP000002519">
    <property type="component" value="Chromosome"/>
</dbReference>
<dbReference type="GO" id="GO:0042597">
    <property type="term" value="C:periplasmic space"/>
    <property type="evidence" value="ECO:0007669"/>
    <property type="project" value="UniProtKB-SubCell"/>
</dbReference>
<dbReference type="Gene3D" id="3.30.1660.10">
    <property type="entry name" value="Flavin-binding protein dodecin"/>
    <property type="match status" value="1"/>
</dbReference>
<dbReference type="InterPro" id="IPR051096">
    <property type="entry name" value="BhsA/McbA_stress_biofilm_assoc"/>
</dbReference>
<dbReference type="InterPro" id="IPR025543">
    <property type="entry name" value="Dodecin-like"/>
</dbReference>
<dbReference type="InterPro" id="IPR036275">
    <property type="entry name" value="YdgH-like_sf"/>
</dbReference>
<dbReference type="InterPro" id="IPR010854">
    <property type="entry name" value="YdgH/BhsA/McbA-like_dom"/>
</dbReference>
<dbReference type="PANTHER" id="PTHR34156:SF4">
    <property type="entry name" value="INNER MEMBRANE PROTEIN"/>
    <property type="match status" value="1"/>
</dbReference>
<dbReference type="PANTHER" id="PTHR34156">
    <property type="entry name" value="OUTER MEMBRANE PROTEIN-RELATED-RELATED"/>
    <property type="match status" value="1"/>
</dbReference>
<dbReference type="Pfam" id="PF07338">
    <property type="entry name" value="YdgH_BhsA-like"/>
    <property type="match status" value="1"/>
</dbReference>
<dbReference type="SUPFAM" id="SSF159871">
    <property type="entry name" value="YdgH-like"/>
    <property type="match status" value="1"/>
</dbReference>
<feature type="signal peptide" evidence="1">
    <location>
        <begin position="1"/>
        <end position="21"/>
    </location>
</feature>
<feature type="chain" id="PRO_0000169754" description="Uncharacterized protein YjfN">
    <location>
        <begin position="22"/>
        <end position="91"/>
    </location>
</feature>
<keyword id="KW-0574">Periplasm</keyword>
<keyword id="KW-1185">Reference proteome</keyword>
<keyword id="KW-0732">Signal</keyword>
<protein>
    <recommendedName>
        <fullName>Uncharacterized protein YjfN</fullName>
    </recommendedName>
</protein>
<comment type="subcellular location">
    <subcellularLocation>
        <location evidence="2">Periplasm</location>
    </subcellularLocation>
</comment>
<comment type="similarity">
    <text evidence="2">Belongs to the BhsA/McbA family.</text>
</comment>
<comment type="sequence caution" evidence="2">
    <conflict type="erroneous initiation">
        <sequence resource="EMBL-CDS" id="AAG59384"/>
    </conflict>
    <text>Extended N-terminus.</text>
</comment>
<proteinExistence type="inferred from homology"/>
<organism>
    <name type="scientific">Escherichia coli O157:H7</name>
    <dbReference type="NCBI Taxonomy" id="83334"/>
    <lineage>
        <taxon>Bacteria</taxon>
        <taxon>Pseudomonadati</taxon>
        <taxon>Pseudomonadota</taxon>
        <taxon>Gammaproteobacteria</taxon>
        <taxon>Enterobacterales</taxon>
        <taxon>Enterobacteriaceae</taxon>
        <taxon>Escherichia</taxon>
    </lineage>
</organism>
<accession>P0AF84</accession>
<accession>P39296</accession>
<sequence>MKQLLASPSLQLVTYPASATAQSAEFASADCVTGLNEIGQISVSNISGDPQDVERIVALKADEQGASWYRIITMYEDQQPDNWRVQAILYA</sequence>
<gene>
    <name type="primary">yjfN</name>
    <name type="ordered locus">Z5795</name>
    <name type="ordered locus">ECs5164</name>
</gene>
<name>YJFN_ECO57</name>
<evidence type="ECO:0000255" key="1"/>
<evidence type="ECO:0000305" key="2"/>